<accession>A3DEQ2</accession>
<proteinExistence type="inferred from homology"/>
<reference key="1">
    <citation type="submission" date="2007-02" db="EMBL/GenBank/DDBJ databases">
        <title>Complete sequence of Clostridium thermocellum ATCC 27405.</title>
        <authorList>
            <consortium name="US DOE Joint Genome Institute"/>
            <person name="Copeland A."/>
            <person name="Lucas S."/>
            <person name="Lapidus A."/>
            <person name="Barry K."/>
            <person name="Detter J.C."/>
            <person name="Glavina del Rio T."/>
            <person name="Hammon N."/>
            <person name="Israni S."/>
            <person name="Dalin E."/>
            <person name="Tice H."/>
            <person name="Pitluck S."/>
            <person name="Chertkov O."/>
            <person name="Brettin T."/>
            <person name="Bruce D."/>
            <person name="Han C."/>
            <person name="Tapia R."/>
            <person name="Gilna P."/>
            <person name="Schmutz J."/>
            <person name="Larimer F."/>
            <person name="Land M."/>
            <person name="Hauser L."/>
            <person name="Kyrpides N."/>
            <person name="Mikhailova N."/>
            <person name="Wu J.H.D."/>
            <person name="Newcomb M."/>
            <person name="Richardson P."/>
        </authorList>
    </citation>
    <scope>NUCLEOTIDE SEQUENCE [LARGE SCALE GENOMIC DNA]</scope>
    <source>
        <strain>ATCC 27405 / DSM 1237 / JCM 9322 / NBRC 103400 / NCIMB 10682 / NRRL B-4536 / VPI 7372</strain>
    </source>
</reference>
<name>MTAD_ACET2</name>
<sequence>MNILIKNADIITCNASDDVLQGAFLGIKDGYIDFIDTKEDALKDFKADRIIDAKGKLVMPGLVNAHTHSGMTILRNFANDLALEDWLFGNVLPVEEKLTPEDIYWGTLLGIAEMIKSGTTTFADMYLHMEEVARAVSETGIRANLCRSPLKDSDKSVEDAVRCFEYFKKWDNSFNGRIKVYIEVHSVYLFDEPSLRMSAEVAKEINTGIHIHVQETLKECEDSNKKYGMSPAEICCKTGIFDVPVIAAHCVHLSDGDMGIIRDKGVNVIHNPTSNLKLGSGIAKVDDMLKNGINVALGTDGAASNNNLNMFEEMHLAALIHKGVHMDPTLIGASCALKMATVNGAKALGFGGEIGEISKGMKADLILIDMDKTHLCPVNDPVSAVVYSAQSSDVDTVIIDGNIVMENRELKTIDEEKVKFNVKEIAKRVLR</sequence>
<dbReference type="EC" id="3.5.4.28" evidence="1"/>
<dbReference type="EC" id="3.5.4.31" evidence="1"/>
<dbReference type="EMBL" id="CP000568">
    <property type="protein sequence ID" value="ABN52431.1"/>
    <property type="molecule type" value="Genomic_DNA"/>
</dbReference>
<dbReference type="RefSeq" id="WP_003518853.1">
    <property type="nucleotide sequence ID" value="NC_009012.1"/>
</dbReference>
<dbReference type="SMR" id="A3DEQ2"/>
<dbReference type="STRING" id="203119.Cthe_1199"/>
<dbReference type="GeneID" id="35803080"/>
<dbReference type="KEGG" id="cth:Cthe_1199"/>
<dbReference type="eggNOG" id="COG0402">
    <property type="taxonomic scope" value="Bacteria"/>
</dbReference>
<dbReference type="HOGENOM" id="CLU_012358_2_1_9"/>
<dbReference type="OrthoDB" id="9807210at2"/>
<dbReference type="Proteomes" id="UP000002145">
    <property type="component" value="Chromosome"/>
</dbReference>
<dbReference type="GO" id="GO:0090614">
    <property type="term" value="F:5'-methylthioadenosine deaminase activity"/>
    <property type="evidence" value="ECO:0007669"/>
    <property type="project" value="UniProtKB-UniRule"/>
</dbReference>
<dbReference type="GO" id="GO:0046872">
    <property type="term" value="F:metal ion binding"/>
    <property type="evidence" value="ECO:0007669"/>
    <property type="project" value="UniProtKB-KW"/>
</dbReference>
<dbReference type="GO" id="GO:0050270">
    <property type="term" value="F:S-adenosylhomocysteine deaminase activity"/>
    <property type="evidence" value="ECO:0000314"/>
    <property type="project" value="CACAO"/>
</dbReference>
<dbReference type="CDD" id="cd01298">
    <property type="entry name" value="ATZ_TRZ_like"/>
    <property type="match status" value="1"/>
</dbReference>
<dbReference type="FunFam" id="3.20.20.140:FF:000014">
    <property type="entry name" value="5-methylthioadenosine/S-adenosylhomocysteine deaminase"/>
    <property type="match status" value="1"/>
</dbReference>
<dbReference type="Gene3D" id="3.20.20.140">
    <property type="entry name" value="Metal-dependent hydrolases"/>
    <property type="match status" value="1"/>
</dbReference>
<dbReference type="Gene3D" id="2.30.40.10">
    <property type="entry name" value="Urease, subunit C, domain 1"/>
    <property type="match status" value="1"/>
</dbReference>
<dbReference type="HAMAP" id="MF_01281">
    <property type="entry name" value="MTA_SAH_deamin"/>
    <property type="match status" value="1"/>
</dbReference>
<dbReference type="InterPro" id="IPR006680">
    <property type="entry name" value="Amidohydro-rel"/>
</dbReference>
<dbReference type="InterPro" id="IPR023512">
    <property type="entry name" value="Deaminase_MtaD/DadD"/>
</dbReference>
<dbReference type="InterPro" id="IPR011059">
    <property type="entry name" value="Metal-dep_hydrolase_composite"/>
</dbReference>
<dbReference type="InterPro" id="IPR032466">
    <property type="entry name" value="Metal_Hydrolase"/>
</dbReference>
<dbReference type="InterPro" id="IPR050287">
    <property type="entry name" value="MTA/SAH_deaminase"/>
</dbReference>
<dbReference type="PANTHER" id="PTHR43794:SF11">
    <property type="entry name" value="AMIDOHYDROLASE-RELATED DOMAIN-CONTAINING PROTEIN"/>
    <property type="match status" value="1"/>
</dbReference>
<dbReference type="PANTHER" id="PTHR43794">
    <property type="entry name" value="AMINOHYDROLASE SSNA-RELATED"/>
    <property type="match status" value="1"/>
</dbReference>
<dbReference type="Pfam" id="PF01979">
    <property type="entry name" value="Amidohydro_1"/>
    <property type="match status" value="1"/>
</dbReference>
<dbReference type="SUPFAM" id="SSF51338">
    <property type="entry name" value="Composite domain of metallo-dependent hydrolases"/>
    <property type="match status" value="1"/>
</dbReference>
<dbReference type="SUPFAM" id="SSF51556">
    <property type="entry name" value="Metallo-dependent hydrolases"/>
    <property type="match status" value="1"/>
</dbReference>
<evidence type="ECO:0000255" key="1">
    <source>
        <dbReference type="HAMAP-Rule" id="MF_01281"/>
    </source>
</evidence>
<keyword id="KW-0378">Hydrolase</keyword>
<keyword id="KW-0479">Metal-binding</keyword>
<keyword id="KW-1185">Reference proteome</keyword>
<keyword id="KW-0862">Zinc</keyword>
<feature type="chain" id="PRO_0000312452" description="5-methylthioadenosine/S-adenosylhomocysteine deaminase">
    <location>
        <begin position="1"/>
        <end position="431"/>
    </location>
</feature>
<feature type="binding site" evidence="1">
    <location>
        <position position="66"/>
    </location>
    <ligand>
        <name>Zn(2+)</name>
        <dbReference type="ChEBI" id="CHEBI:29105"/>
    </ligand>
</feature>
<feature type="binding site" evidence="1">
    <location>
        <position position="68"/>
    </location>
    <ligand>
        <name>Zn(2+)</name>
        <dbReference type="ChEBI" id="CHEBI:29105"/>
    </ligand>
</feature>
<feature type="binding site" evidence="1">
    <location>
        <position position="95"/>
    </location>
    <ligand>
        <name>substrate</name>
    </ligand>
</feature>
<feature type="binding site" evidence="1">
    <location>
        <position position="147"/>
    </location>
    <ligand>
        <name>substrate</name>
    </ligand>
</feature>
<feature type="binding site" evidence="1">
    <location>
        <position position="185"/>
    </location>
    <ligand>
        <name>substrate</name>
    </ligand>
</feature>
<feature type="binding site" evidence="1">
    <location>
        <position position="212"/>
    </location>
    <ligand>
        <name>Zn(2+)</name>
        <dbReference type="ChEBI" id="CHEBI:29105"/>
    </ligand>
</feature>
<feature type="binding site" evidence="1">
    <location>
        <position position="215"/>
    </location>
    <ligand>
        <name>substrate</name>
    </ligand>
</feature>
<feature type="binding site" evidence="1">
    <location>
        <position position="300"/>
    </location>
    <ligand>
        <name>substrate</name>
    </ligand>
</feature>
<feature type="binding site" evidence="1">
    <location>
        <position position="300"/>
    </location>
    <ligand>
        <name>Zn(2+)</name>
        <dbReference type="ChEBI" id="CHEBI:29105"/>
    </ligand>
</feature>
<protein>
    <recommendedName>
        <fullName evidence="1">5-methylthioadenosine/S-adenosylhomocysteine deaminase</fullName>
        <shortName evidence="1">MTA/SAH deaminase</shortName>
        <ecNumber evidence="1">3.5.4.28</ecNumber>
        <ecNumber evidence="1">3.5.4.31</ecNumber>
    </recommendedName>
</protein>
<comment type="function">
    <text evidence="1">Catalyzes the deamination of 5-methylthioadenosine and S-adenosyl-L-homocysteine into 5-methylthioinosine and S-inosyl-L-homocysteine, respectively. Is also able to deaminate adenosine.</text>
</comment>
<comment type="catalytic activity">
    <reaction evidence="1">
        <text>S-adenosyl-L-homocysteine + H2O + H(+) = S-inosyl-L-homocysteine + NH4(+)</text>
        <dbReference type="Rhea" id="RHEA:20716"/>
        <dbReference type="ChEBI" id="CHEBI:15377"/>
        <dbReference type="ChEBI" id="CHEBI:15378"/>
        <dbReference type="ChEBI" id="CHEBI:28938"/>
        <dbReference type="ChEBI" id="CHEBI:57856"/>
        <dbReference type="ChEBI" id="CHEBI:57985"/>
        <dbReference type="EC" id="3.5.4.28"/>
    </reaction>
</comment>
<comment type="catalytic activity">
    <reaction evidence="1">
        <text>S-methyl-5'-thioadenosine + H2O + H(+) = S-methyl-5'-thioinosine + NH4(+)</text>
        <dbReference type="Rhea" id="RHEA:25025"/>
        <dbReference type="ChEBI" id="CHEBI:15377"/>
        <dbReference type="ChEBI" id="CHEBI:15378"/>
        <dbReference type="ChEBI" id="CHEBI:17509"/>
        <dbReference type="ChEBI" id="CHEBI:28938"/>
        <dbReference type="ChEBI" id="CHEBI:48595"/>
        <dbReference type="EC" id="3.5.4.31"/>
    </reaction>
</comment>
<comment type="cofactor">
    <cofactor evidence="1">
        <name>Zn(2+)</name>
        <dbReference type="ChEBI" id="CHEBI:29105"/>
    </cofactor>
    <text evidence="1">Binds 1 zinc ion per subunit.</text>
</comment>
<comment type="similarity">
    <text evidence="1">Belongs to the metallo-dependent hydrolases superfamily. MTA/SAH deaminase family.</text>
</comment>
<organism>
    <name type="scientific">Acetivibrio thermocellus (strain ATCC 27405 / DSM 1237 / JCM 9322 / NBRC 103400 / NCIMB 10682 / NRRL B-4536 / VPI 7372)</name>
    <name type="common">Clostridium thermocellum</name>
    <dbReference type="NCBI Taxonomy" id="203119"/>
    <lineage>
        <taxon>Bacteria</taxon>
        <taxon>Bacillati</taxon>
        <taxon>Bacillota</taxon>
        <taxon>Clostridia</taxon>
        <taxon>Eubacteriales</taxon>
        <taxon>Oscillospiraceae</taxon>
        <taxon>Acetivibrio</taxon>
    </lineage>
</organism>
<gene>
    <name evidence="1" type="primary">mtaD</name>
    <name type="ordered locus">Cthe_1199</name>
</gene>